<protein>
    <recommendedName>
        <fullName>Archaeal histone A</fullName>
    </recommendedName>
    <alternativeName>
        <fullName>Archaeal histone A1</fullName>
    </alternativeName>
</protein>
<name>HARA_PYRAB</name>
<comment type="function">
    <text evidence="1">Binds and compact DNA (95 to 150 base pairs) to form nucleosome-like structures that contain positive DNA supercoils. Increases the resistance of DNA to thermal denaturation (in vitro).</text>
</comment>
<comment type="subunit">
    <text evidence="1">Homodimer or heterodimer with another histone. Dimers then assemble into higher oligomers, with the DNA wrapped around the protein core (By similarity).</text>
</comment>
<comment type="subcellular location">
    <subcellularLocation>
        <location evidence="2">Cytoplasm</location>
    </subcellularLocation>
    <subcellularLocation>
        <location evidence="2">Chromosome</location>
    </subcellularLocation>
</comment>
<comment type="similarity">
    <text evidence="2">Belongs to the archaeal histone HMF family.</text>
</comment>
<keyword id="KW-0158">Chromosome</keyword>
<keyword id="KW-0963">Cytoplasm</keyword>
<keyword id="KW-0238">DNA-binding</keyword>
<reference key="1">
    <citation type="journal article" date="2003" name="Mol. Microbiol.">
        <title>An integrated analysis of the genome of the hyperthermophilic archaeon Pyrococcus abyssi.</title>
        <authorList>
            <person name="Cohen G.N."/>
            <person name="Barbe V."/>
            <person name="Flament D."/>
            <person name="Galperin M."/>
            <person name="Heilig R."/>
            <person name="Lecompte O."/>
            <person name="Poch O."/>
            <person name="Prieur D."/>
            <person name="Querellou J."/>
            <person name="Ripp R."/>
            <person name="Thierry J.-C."/>
            <person name="Van der Oost J."/>
            <person name="Weissenbach J."/>
            <person name="Zivanovic Y."/>
            <person name="Forterre P."/>
        </authorList>
    </citation>
    <scope>NUCLEOTIDE SEQUENCE [LARGE SCALE GENOMIC DNA]</scope>
    <source>
        <strain>GE5 / Orsay</strain>
    </source>
</reference>
<reference key="2">
    <citation type="journal article" date="2012" name="Curr. Microbiol.">
        <title>Re-annotation of two hyperthermophilic archaea Pyrococcus abyssi GE5 and Pyrococcus furiosus DSM 3638.</title>
        <authorList>
            <person name="Gao J."/>
            <person name="Wang J."/>
        </authorList>
    </citation>
    <scope>GENOME REANNOTATION</scope>
    <source>
        <strain>GE5 / Orsay</strain>
    </source>
</reference>
<proteinExistence type="inferred from homology"/>
<gene>
    <name type="ordered locus">PYRAB03470</name>
    <name type="ORF">PAB3089</name>
</gene>
<sequence length="67" mass="7406">MGELPIAPVDRLIRKAGAERVSEQAAKVLAEYLEEYAIEVAKKAVEFARHAGRKTVKVEDIKLAIKS</sequence>
<feature type="chain" id="PRO_0000154994" description="Archaeal histone A">
    <location>
        <begin position="1"/>
        <end position="67"/>
    </location>
</feature>
<feature type="region of interest" description="Interaction with DNA" evidence="1">
    <location>
        <begin position="20"/>
        <end position="22"/>
    </location>
</feature>
<feature type="region of interest" description="Interaction with DNA" evidence="1">
    <location>
        <begin position="54"/>
        <end position="57"/>
    </location>
</feature>
<accession>P61881</accession>
<accession>G8ZHY1</accession>
<accession>P58298</accession>
<accession>Q9V1T0</accession>
<organism>
    <name type="scientific">Pyrococcus abyssi (strain GE5 / Orsay)</name>
    <dbReference type="NCBI Taxonomy" id="272844"/>
    <lineage>
        <taxon>Archaea</taxon>
        <taxon>Methanobacteriati</taxon>
        <taxon>Methanobacteriota</taxon>
        <taxon>Thermococci</taxon>
        <taxon>Thermococcales</taxon>
        <taxon>Thermococcaceae</taxon>
        <taxon>Pyrococcus</taxon>
    </lineage>
</organism>
<dbReference type="EMBL" id="AJ248284">
    <property type="protein sequence ID" value="CAB49269.1"/>
    <property type="molecule type" value="Genomic_DNA"/>
</dbReference>
<dbReference type="EMBL" id="HE613800">
    <property type="protein sequence ID" value="CCE69724.1"/>
    <property type="molecule type" value="Genomic_DNA"/>
</dbReference>
<dbReference type="PIR" id="F75148">
    <property type="entry name" value="F75148"/>
</dbReference>
<dbReference type="RefSeq" id="WP_010867469.1">
    <property type="nucleotide sequence ID" value="NC_000868.1"/>
</dbReference>
<dbReference type="SMR" id="P61881"/>
<dbReference type="STRING" id="272844.PAB3089"/>
<dbReference type="KEGG" id="pab:PAB3089"/>
<dbReference type="PATRIC" id="fig|272844.11.peg.368"/>
<dbReference type="eggNOG" id="arCOG02144">
    <property type="taxonomic scope" value="Archaea"/>
</dbReference>
<dbReference type="HOGENOM" id="CLU_192667_0_0_2"/>
<dbReference type="OrthoDB" id="7514at2157"/>
<dbReference type="PhylomeDB" id="P61881"/>
<dbReference type="Proteomes" id="UP000000810">
    <property type="component" value="Chromosome"/>
</dbReference>
<dbReference type="Proteomes" id="UP000009139">
    <property type="component" value="Chromosome"/>
</dbReference>
<dbReference type="GO" id="GO:0005694">
    <property type="term" value="C:chromosome"/>
    <property type="evidence" value="ECO:0007669"/>
    <property type="project" value="UniProtKB-SubCell"/>
</dbReference>
<dbReference type="GO" id="GO:0005737">
    <property type="term" value="C:cytoplasm"/>
    <property type="evidence" value="ECO:0007669"/>
    <property type="project" value="UniProtKB-SubCell"/>
</dbReference>
<dbReference type="GO" id="GO:0003677">
    <property type="term" value="F:DNA binding"/>
    <property type="evidence" value="ECO:0007669"/>
    <property type="project" value="UniProtKB-KW"/>
</dbReference>
<dbReference type="GO" id="GO:0046982">
    <property type="term" value="F:protein heterodimerization activity"/>
    <property type="evidence" value="ECO:0007669"/>
    <property type="project" value="InterPro"/>
</dbReference>
<dbReference type="CDD" id="cd22909">
    <property type="entry name" value="HFD_archaea_histone-like"/>
    <property type="match status" value="1"/>
</dbReference>
<dbReference type="Gene3D" id="1.10.20.10">
    <property type="entry name" value="Histone, subunit A"/>
    <property type="match status" value="1"/>
</dbReference>
<dbReference type="InterPro" id="IPR050947">
    <property type="entry name" value="Archaeal_histone_HMF"/>
</dbReference>
<dbReference type="InterPro" id="IPR003958">
    <property type="entry name" value="CBFA_NFYB_domain"/>
</dbReference>
<dbReference type="InterPro" id="IPR009072">
    <property type="entry name" value="Histone-fold"/>
</dbReference>
<dbReference type="InterPro" id="IPR050004">
    <property type="entry name" value="HmfB-like"/>
</dbReference>
<dbReference type="NCBIfam" id="NF043032">
    <property type="entry name" value="archaea_histone"/>
    <property type="match status" value="1"/>
</dbReference>
<dbReference type="PANTHER" id="PTHR47828">
    <property type="entry name" value="ARCHAEAL HISTONE A"/>
    <property type="match status" value="1"/>
</dbReference>
<dbReference type="PANTHER" id="PTHR47828:SF1">
    <property type="entry name" value="ARCHAEAL HISTONE A"/>
    <property type="match status" value="1"/>
</dbReference>
<dbReference type="Pfam" id="PF00808">
    <property type="entry name" value="CBFD_NFYB_HMF"/>
    <property type="match status" value="1"/>
</dbReference>
<dbReference type="SUPFAM" id="SSF47113">
    <property type="entry name" value="Histone-fold"/>
    <property type="match status" value="1"/>
</dbReference>
<evidence type="ECO:0000250" key="1">
    <source>
        <dbReference type="UniProtKB" id="P19267"/>
    </source>
</evidence>
<evidence type="ECO:0000305" key="2"/>